<gene>
    <name type="primary">KPHMT1</name>
    <name type="synonym">PANB1</name>
    <name type="ordered locus">At2g46110</name>
    <name type="ORF">T3F17.24</name>
</gene>
<comment type="function">
    <text evidence="3">Catalyzes the reversible reaction in which hydroxymethyl group from 5,10-methylenetetrahydrofolate is transferred onto alpha-ketoisovalerate to form ketopantoate.</text>
</comment>
<comment type="catalytic activity">
    <reaction evidence="3">
        <text>3-methyl-2-oxobutanoate + (6R)-5,10-methylene-5,6,7,8-tetrahydrofolate + H2O = 2-dehydropantoate + (6S)-5,6,7,8-tetrahydrofolate</text>
        <dbReference type="Rhea" id="RHEA:11824"/>
        <dbReference type="ChEBI" id="CHEBI:11561"/>
        <dbReference type="ChEBI" id="CHEBI:11851"/>
        <dbReference type="ChEBI" id="CHEBI:15377"/>
        <dbReference type="ChEBI" id="CHEBI:15636"/>
        <dbReference type="ChEBI" id="CHEBI:57453"/>
        <dbReference type="EC" id="2.1.2.11"/>
    </reaction>
</comment>
<comment type="cofactor">
    <cofactor evidence="1">
        <name>Mg(2+)</name>
        <dbReference type="ChEBI" id="CHEBI:18420"/>
    </cofactor>
    <text evidence="1">Binds 1 Mg(2+) ion per subunit.</text>
</comment>
<comment type="pathway">
    <text>Cofactor biosynthesis; (R)-pantothenate biosynthesis; (R)-pantoate from 3-methyl-2-oxobutanoate: step 1/2.</text>
</comment>
<comment type="subcellular location">
    <subcellularLocation>
        <location evidence="3">Mitochondrion</location>
    </subcellularLocation>
</comment>
<comment type="similarity">
    <text evidence="4">Belongs to the PanB family.</text>
</comment>
<organism>
    <name type="scientific">Arabidopsis thaliana</name>
    <name type="common">Mouse-ear cress</name>
    <dbReference type="NCBI Taxonomy" id="3702"/>
    <lineage>
        <taxon>Eukaryota</taxon>
        <taxon>Viridiplantae</taxon>
        <taxon>Streptophyta</taxon>
        <taxon>Embryophyta</taxon>
        <taxon>Tracheophyta</taxon>
        <taxon>Spermatophyta</taxon>
        <taxon>Magnoliopsida</taxon>
        <taxon>eudicotyledons</taxon>
        <taxon>Gunneridae</taxon>
        <taxon>Pentapetalae</taxon>
        <taxon>rosids</taxon>
        <taxon>malvids</taxon>
        <taxon>Brassicales</taxon>
        <taxon>Brassicaceae</taxon>
        <taxon>Camelineae</taxon>
        <taxon>Arabidopsis</taxon>
    </lineage>
</organism>
<keyword id="KW-0460">Magnesium</keyword>
<keyword id="KW-0479">Metal-binding</keyword>
<keyword id="KW-0496">Mitochondrion</keyword>
<keyword id="KW-0566">Pantothenate biosynthesis</keyword>
<keyword id="KW-1185">Reference proteome</keyword>
<keyword id="KW-0808">Transferase</keyword>
<keyword id="KW-0809">Transit peptide</keyword>
<sequence length="347" mass="36693">MASSLTRNCSRFSKAISVRFMSNLPENTVYGGPKPQNPNQRVTLTHLRQKHRRGEPITVVTAYDYPSAVHLDTAGIDVCLVGDSASMVVHGHDTTLPISLDEMLVHCRAVARGAKRPLLVGDLPFGTYESSSSQAVDTAVRVLKEGGMDAIKLEGGSASRITAAKAIVEAGIAVIGHVGLTPQAISVLGGFRPQGRNIASAVKVVETAMALQEAGCFSVVLECVPPPVAAAATSALKIPTIGIGAGPFCSGQVLVYHDLLGMMQHPHHAKVTPKFCKQYANVGEVINKALMEYKEEVSKKVFPGPSHSPYKITASELDGFLTELQKLGFDKAASAAALAAENMEPSK</sequence>
<accession>O82357</accession>
<name>PANB1_ARATH</name>
<protein>
    <recommendedName>
        <fullName>3-methyl-2-oxobutanoate hydroxymethyltransferase 1, mitochondrial</fullName>
        <ecNumber>2.1.2.11</ecNumber>
    </recommendedName>
    <alternativeName>
        <fullName>Ketopantoate hydroxymethyltransferase 1</fullName>
    </alternativeName>
</protein>
<proteinExistence type="evidence at protein level"/>
<dbReference type="EC" id="2.1.2.11"/>
<dbReference type="EMBL" id="AC005397">
    <property type="protein sequence ID" value="AAC62893.1"/>
    <property type="molecule type" value="Genomic_DNA"/>
</dbReference>
<dbReference type="EMBL" id="CP002685">
    <property type="protein sequence ID" value="AEC10645.1"/>
    <property type="molecule type" value="Genomic_DNA"/>
</dbReference>
<dbReference type="EMBL" id="BT004820">
    <property type="protein sequence ID" value="AAO44086.1"/>
    <property type="molecule type" value="mRNA"/>
</dbReference>
<dbReference type="EMBL" id="AK227849">
    <property type="protein sequence ID" value="BAE99826.1"/>
    <property type="molecule type" value="mRNA"/>
</dbReference>
<dbReference type="PIR" id="H84898">
    <property type="entry name" value="H84898"/>
</dbReference>
<dbReference type="RefSeq" id="NP_182135.1">
    <property type="nucleotide sequence ID" value="NM_130174.5"/>
</dbReference>
<dbReference type="SMR" id="O82357"/>
<dbReference type="BioGRID" id="4554">
    <property type="interactions" value="3"/>
</dbReference>
<dbReference type="FunCoup" id="O82357">
    <property type="interactions" value="329"/>
</dbReference>
<dbReference type="STRING" id="3702.O82357"/>
<dbReference type="MetOSite" id="O82357"/>
<dbReference type="PaxDb" id="3702-AT2G46110.1"/>
<dbReference type="ProteomicsDB" id="248635"/>
<dbReference type="EnsemblPlants" id="AT2G46110.1">
    <property type="protein sequence ID" value="AT2G46110.1"/>
    <property type="gene ID" value="AT2G46110"/>
</dbReference>
<dbReference type="GeneID" id="819219"/>
<dbReference type="Gramene" id="AT2G46110.1">
    <property type="protein sequence ID" value="AT2G46110.1"/>
    <property type="gene ID" value="AT2G46110"/>
</dbReference>
<dbReference type="KEGG" id="ath:AT2G46110"/>
<dbReference type="Araport" id="AT2G46110"/>
<dbReference type="TAIR" id="AT2G46110">
    <property type="gene designation" value="KPHMT1"/>
</dbReference>
<dbReference type="eggNOG" id="KOG2949">
    <property type="taxonomic scope" value="Eukaryota"/>
</dbReference>
<dbReference type="HOGENOM" id="CLU_036645_2_0_1"/>
<dbReference type="InParanoid" id="O82357"/>
<dbReference type="OMA" id="ILVMNDM"/>
<dbReference type="PhylomeDB" id="O82357"/>
<dbReference type="BioCyc" id="ARA:AT2G46110-MONOMER"/>
<dbReference type="BioCyc" id="MetaCyc:AT2G46110-MONOMER"/>
<dbReference type="UniPathway" id="UPA00028">
    <property type="reaction ID" value="UER00003"/>
</dbReference>
<dbReference type="CD-CODE" id="4299E36E">
    <property type="entry name" value="Nucleolus"/>
</dbReference>
<dbReference type="PRO" id="PR:O82357"/>
<dbReference type="Proteomes" id="UP000006548">
    <property type="component" value="Chromosome 2"/>
</dbReference>
<dbReference type="ExpressionAtlas" id="O82357">
    <property type="expression patterns" value="baseline and differential"/>
</dbReference>
<dbReference type="GO" id="GO:0005739">
    <property type="term" value="C:mitochondrion"/>
    <property type="evidence" value="ECO:0000314"/>
    <property type="project" value="TAIR"/>
</dbReference>
<dbReference type="GO" id="GO:0003864">
    <property type="term" value="F:3-methyl-2-oxobutanoate hydroxymethyltransferase activity"/>
    <property type="evidence" value="ECO:0007669"/>
    <property type="project" value="UniProtKB-EC"/>
</dbReference>
<dbReference type="GO" id="GO:0046872">
    <property type="term" value="F:metal ion binding"/>
    <property type="evidence" value="ECO:0007669"/>
    <property type="project" value="UniProtKB-KW"/>
</dbReference>
<dbReference type="GO" id="GO:0015940">
    <property type="term" value="P:pantothenate biosynthetic process"/>
    <property type="evidence" value="ECO:0007669"/>
    <property type="project" value="UniProtKB-UniPathway"/>
</dbReference>
<dbReference type="CDD" id="cd06557">
    <property type="entry name" value="KPHMT-like"/>
    <property type="match status" value="1"/>
</dbReference>
<dbReference type="FunFam" id="3.20.20.60:FF:000003">
    <property type="entry name" value="3-methyl-2-oxobutanoate hydroxymethyltransferase"/>
    <property type="match status" value="1"/>
</dbReference>
<dbReference type="Gene3D" id="3.20.20.60">
    <property type="entry name" value="Phosphoenolpyruvate-binding domains"/>
    <property type="match status" value="1"/>
</dbReference>
<dbReference type="HAMAP" id="MF_00156">
    <property type="entry name" value="PanB"/>
    <property type="match status" value="1"/>
</dbReference>
<dbReference type="InterPro" id="IPR003700">
    <property type="entry name" value="Pantoate_hydroxy_MeTrfase"/>
</dbReference>
<dbReference type="InterPro" id="IPR015813">
    <property type="entry name" value="Pyrv/PenolPyrv_kinase-like_dom"/>
</dbReference>
<dbReference type="InterPro" id="IPR040442">
    <property type="entry name" value="Pyrv_kinase-like_dom_sf"/>
</dbReference>
<dbReference type="NCBIfam" id="TIGR00222">
    <property type="entry name" value="panB"/>
    <property type="match status" value="1"/>
</dbReference>
<dbReference type="NCBIfam" id="NF001452">
    <property type="entry name" value="PRK00311.1"/>
    <property type="match status" value="1"/>
</dbReference>
<dbReference type="PANTHER" id="PTHR20881">
    <property type="entry name" value="3-METHYL-2-OXOBUTANOATE HYDROXYMETHYLTRANSFERASE"/>
    <property type="match status" value="1"/>
</dbReference>
<dbReference type="PANTHER" id="PTHR20881:SF0">
    <property type="entry name" value="3-METHYL-2-OXOBUTANOATE HYDROXYMETHYLTRANSFERASE"/>
    <property type="match status" value="1"/>
</dbReference>
<dbReference type="Pfam" id="PF02548">
    <property type="entry name" value="Pantoate_transf"/>
    <property type="match status" value="1"/>
</dbReference>
<dbReference type="SUPFAM" id="SSF51621">
    <property type="entry name" value="Phosphoenolpyruvate/pyruvate domain"/>
    <property type="match status" value="1"/>
</dbReference>
<feature type="transit peptide" description="Mitochondrion" evidence="2">
    <location>
        <begin position="1"/>
        <end position="48"/>
    </location>
</feature>
<feature type="chain" id="PRO_0000429566" description="3-methyl-2-oxobutanoate hydroxymethyltransferase 1, mitochondrial">
    <location>
        <begin position="49"/>
        <end position="347"/>
    </location>
</feature>
<feature type="active site" description="Proton acceptor" evidence="1">
    <location>
        <position position="222"/>
    </location>
</feature>
<feature type="binding site" evidence="1">
    <location>
        <begin position="83"/>
        <end position="84"/>
    </location>
    <ligand>
        <name>3-methyl-2-oxobutanoate</name>
        <dbReference type="ChEBI" id="CHEBI:11851"/>
    </ligand>
</feature>
<feature type="binding site" evidence="1">
    <location>
        <position position="83"/>
    </location>
    <ligand>
        <name>Mg(2+)</name>
        <dbReference type="ChEBI" id="CHEBI:18420"/>
    </ligand>
</feature>
<feature type="binding site" evidence="1">
    <location>
        <position position="122"/>
    </location>
    <ligand>
        <name>3-methyl-2-oxobutanoate</name>
        <dbReference type="ChEBI" id="CHEBI:11851"/>
    </ligand>
</feature>
<feature type="binding site" evidence="1">
    <location>
        <position position="122"/>
    </location>
    <ligand>
        <name>Mg(2+)</name>
        <dbReference type="ChEBI" id="CHEBI:18420"/>
    </ligand>
</feature>
<feature type="binding site" evidence="1">
    <location>
        <position position="152"/>
    </location>
    <ligand>
        <name>3-methyl-2-oxobutanoate</name>
        <dbReference type="ChEBI" id="CHEBI:11851"/>
    </ligand>
</feature>
<feature type="binding site" evidence="1">
    <location>
        <position position="154"/>
    </location>
    <ligand>
        <name>Mg(2+)</name>
        <dbReference type="ChEBI" id="CHEBI:18420"/>
    </ligand>
</feature>
<reference key="1">
    <citation type="journal article" date="1999" name="Nature">
        <title>Sequence and analysis of chromosome 2 of the plant Arabidopsis thaliana.</title>
        <authorList>
            <person name="Lin X."/>
            <person name="Kaul S."/>
            <person name="Rounsley S.D."/>
            <person name="Shea T.P."/>
            <person name="Benito M.-I."/>
            <person name="Town C.D."/>
            <person name="Fujii C.Y."/>
            <person name="Mason T.M."/>
            <person name="Bowman C.L."/>
            <person name="Barnstead M.E."/>
            <person name="Feldblyum T.V."/>
            <person name="Buell C.R."/>
            <person name="Ketchum K.A."/>
            <person name="Lee J.J."/>
            <person name="Ronning C.M."/>
            <person name="Koo H.L."/>
            <person name="Moffat K.S."/>
            <person name="Cronin L.A."/>
            <person name="Shen M."/>
            <person name="Pai G."/>
            <person name="Van Aken S."/>
            <person name="Umayam L."/>
            <person name="Tallon L.J."/>
            <person name="Gill J.E."/>
            <person name="Adams M.D."/>
            <person name="Carrera A.J."/>
            <person name="Creasy T.H."/>
            <person name="Goodman H.M."/>
            <person name="Somerville C.R."/>
            <person name="Copenhaver G.P."/>
            <person name="Preuss D."/>
            <person name="Nierman W.C."/>
            <person name="White O."/>
            <person name="Eisen J.A."/>
            <person name="Salzberg S.L."/>
            <person name="Fraser C.M."/>
            <person name="Venter J.C."/>
        </authorList>
    </citation>
    <scope>NUCLEOTIDE SEQUENCE [LARGE SCALE GENOMIC DNA]</scope>
    <source>
        <strain>cv. Columbia</strain>
    </source>
</reference>
<reference key="2">
    <citation type="journal article" date="2017" name="Plant J.">
        <title>Araport11: a complete reannotation of the Arabidopsis thaliana reference genome.</title>
        <authorList>
            <person name="Cheng C.Y."/>
            <person name="Krishnakumar V."/>
            <person name="Chan A.P."/>
            <person name="Thibaud-Nissen F."/>
            <person name="Schobel S."/>
            <person name="Town C.D."/>
        </authorList>
    </citation>
    <scope>GENOME REANNOTATION</scope>
    <source>
        <strain>cv. Columbia</strain>
    </source>
</reference>
<reference key="3">
    <citation type="journal article" date="2003" name="Science">
        <title>Empirical analysis of transcriptional activity in the Arabidopsis genome.</title>
        <authorList>
            <person name="Yamada K."/>
            <person name="Lim J."/>
            <person name="Dale J.M."/>
            <person name="Chen H."/>
            <person name="Shinn P."/>
            <person name="Palm C.J."/>
            <person name="Southwick A.M."/>
            <person name="Wu H.C."/>
            <person name="Kim C.J."/>
            <person name="Nguyen M."/>
            <person name="Pham P.K."/>
            <person name="Cheuk R.F."/>
            <person name="Karlin-Newmann G."/>
            <person name="Liu S.X."/>
            <person name="Lam B."/>
            <person name="Sakano H."/>
            <person name="Wu T."/>
            <person name="Yu G."/>
            <person name="Miranda M."/>
            <person name="Quach H.L."/>
            <person name="Tripp M."/>
            <person name="Chang C.H."/>
            <person name="Lee J.M."/>
            <person name="Toriumi M.J."/>
            <person name="Chan M.M."/>
            <person name="Tang C.C."/>
            <person name="Onodera C.S."/>
            <person name="Deng J.M."/>
            <person name="Akiyama K."/>
            <person name="Ansari Y."/>
            <person name="Arakawa T."/>
            <person name="Banh J."/>
            <person name="Banno F."/>
            <person name="Bowser L."/>
            <person name="Brooks S.Y."/>
            <person name="Carninci P."/>
            <person name="Chao Q."/>
            <person name="Choy N."/>
            <person name="Enju A."/>
            <person name="Goldsmith A.D."/>
            <person name="Gurjal M."/>
            <person name="Hansen N.F."/>
            <person name="Hayashizaki Y."/>
            <person name="Johnson-Hopson C."/>
            <person name="Hsuan V.W."/>
            <person name="Iida K."/>
            <person name="Karnes M."/>
            <person name="Khan S."/>
            <person name="Koesema E."/>
            <person name="Ishida J."/>
            <person name="Jiang P.X."/>
            <person name="Jones T."/>
            <person name="Kawai J."/>
            <person name="Kamiya A."/>
            <person name="Meyers C."/>
            <person name="Nakajima M."/>
            <person name="Narusaka M."/>
            <person name="Seki M."/>
            <person name="Sakurai T."/>
            <person name="Satou M."/>
            <person name="Tamse R."/>
            <person name="Vaysberg M."/>
            <person name="Wallender E.K."/>
            <person name="Wong C."/>
            <person name="Yamamura Y."/>
            <person name="Yuan S."/>
            <person name="Shinozaki K."/>
            <person name="Davis R.W."/>
            <person name="Theologis A."/>
            <person name="Ecker J.R."/>
        </authorList>
    </citation>
    <scope>NUCLEOTIDE SEQUENCE [LARGE SCALE MRNA]</scope>
    <source>
        <strain>cv. Columbia</strain>
    </source>
</reference>
<reference key="4">
    <citation type="submission" date="2006-07" db="EMBL/GenBank/DDBJ databases">
        <title>Large-scale analysis of RIKEN Arabidopsis full-length (RAFL) cDNAs.</title>
        <authorList>
            <person name="Totoki Y."/>
            <person name="Seki M."/>
            <person name="Ishida J."/>
            <person name="Nakajima M."/>
            <person name="Enju A."/>
            <person name="Kamiya A."/>
            <person name="Narusaka M."/>
            <person name="Shin-i T."/>
            <person name="Nakagawa M."/>
            <person name="Sakamoto N."/>
            <person name="Oishi K."/>
            <person name="Kohara Y."/>
            <person name="Kobayashi M."/>
            <person name="Toyoda A."/>
            <person name="Sakaki Y."/>
            <person name="Sakurai T."/>
            <person name="Iida K."/>
            <person name="Akiyama K."/>
            <person name="Satou M."/>
            <person name="Toyoda T."/>
            <person name="Konagaya A."/>
            <person name="Carninci P."/>
            <person name="Kawai J."/>
            <person name="Hayashizaki Y."/>
            <person name="Shinozaki K."/>
        </authorList>
    </citation>
    <scope>NUCLEOTIDE SEQUENCE [LARGE SCALE MRNA]</scope>
    <source>
        <strain>cv. Columbia</strain>
    </source>
</reference>
<reference key="5">
    <citation type="journal article" date="2004" name="Plant J.">
        <title>Organisation of the pantothenate (vitamin B5) biosynthesis pathway in higher plants.</title>
        <authorList>
            <person name="Ottenhof H.H."/>
            <person name="Ashurst J.L."/>
            <person name="Whitney H.M."/>
            <person name="Saldanha S.A."/>
            <person name="Schmitzberger F."/>
            <person name="Gweon H.S."/>
            <person name="Blundell T.L."/>
            <person name="Abell C."/>
            <person name="Smith A.G."/>
        </authorList>
    </citation>
    <scope>FUNCTION</scope>
    <scope>CATALYTIC ACTIVITY</scope>
    <scope>SUBCELLULAR LOCATION</scope>
</reference>
<evidence type="ECO:0000250" key="1"/>
<evidence type="ECO:0000255" key="2"/>
<evidence type="ECO:0000269" key="3">
    <source>
    </source>
</evidence>
<evidence type="ECO:0000305" key="4"/>